<protein>
    <recommendedName>
        <fullName evidence="1">DNA-directed RNA polymerase subunit beta'</fullName>
        <shortName evidence="1">RNAP subunit beta'</shortName>
        <ecNumber evidence="1">2.7.7.6</ecNumber>
    </recommendedName>
    <alternativeName>
        <fullName evidence="1">RNA polymerase subunit beta'</fullName>
    </alternativeName>
    <alternativeName>
        <fullName evidence="1">Transcriptase subunit beta'</fullName>
    </alternativeName>
</protein>
<keyword id="KW-0240">DNA-directed RNA polymerase</keyword>
<keyword id="KW-0460">Magnesium</keyword>
<keyword id="KW-0479">Metal-binding</keyword>
<keyword id="KW-0548">Nucleotidyltransferase</keyword>
<keyword id="KW-0804">Transcription</keyword>
<keyword id="KW-0808">Transferase</keyword>
<keyword id="KW-0862">Zinc</keyword>
<name>RPOC_CLOBK</name>
<feature type="chain" id="PRO_0000353334" description="DNA-directed RNA polymerase subunit beta'">
    <location>
        <begin position="1"/>
        <end position="1178"/>
    </location>
</feature>
<feature type="binding site" evidence="1">
    <location>
        <position position="60"/>
    </location>
    <ligand>
        <name>Zn(2+)</name>
        <dbReference type="ChEBI" id="CHEBI:29105"/>
        <label>1</label>
    </ligand>
</feature>
<feature type="binding site" evidence="1">
    <location>
        <position position="62"/>
    </location>
    <ligand>
        <name>Zn(2+)</name>
        <dbReference type="ChEBI" id="CHEBI:29105"/>
        <label>1</label>
    </ligand>
</feature>
<feature type="binding site" evidence="1">
    <location>
        <position position="75"/>
    </location>
    <ligand>
        <name>Zn(2+)</name>
        <dbReference type="ChEBI" id="CHEBI:29105"/>
        <label>1</label>
    </ligand>
</feature>
<feature type="binding site" evidence="1">
    <location>
        <position position="78"/>
    </location>
    <ligand>
        <name>Zn(2+)</name>
        <dbReference type="ChEBI" id="CHEBI:29105"/>
        <label>1</label>
    </ligand>
</feature>
<feature type="binding site" evidence="1">
    <location>
        <position position="450"/>
    </location>
    <ligand>
        <name>Mg(2+)</name>
        <dbReference type="ChEBI" id="CHEBI:18420"/>
    </ligand>
</feature>
<feature type="binding site" evidence="1">
    <location>
        <position position="452"/>
    </location>
    <ligand>
        <name>Mg(2+)</name>
        <dbReference type="ChEBI" id="CHEBI:18420"/>
    </ligand>
</feature>
<feature type="binding site" evidence="1">
    <location>
        <position position="454"/>
    </location>
    <ligand>
        <name>Mg(2+)</name>
        <dbReference type="ChEBI" id="CHEBI:18420"/>
    </ligand>
</feature>
<feature type="binding site" evidence="1">
    <location>
        <position position="795"/>
    </location>
    <ligand>
        <name>Zn(2+)</name>
        <dbReference type="ChEBI" id="CHEBI:29105"/>
        <label>2</label>
    </ligand>
</feature>
<feature type="binding site" evidence="1">
    <location>
        <position position="869"/>
    </location>
    <ligand>
        <name>Zn(2+)</name>
        <dbReference type="ChEBI" id="CHEBI:29105"/>
        <label>2</label>
    </ligand>
</feature>
<feature type="binding site" evidence="1">
    <location>
        <position position="876"/>
    </location>
    <ligand>
        <name>Zn(2+)</name>
        <dbReference type="ChEBI" id="CHEBI:29105"/>
        <label>2</label>
    </ligand>
</feature>
<feature type="binding site" evidence="1">
    <location>
        <position position="879"/>
    </location>
    <ligand>
        <name>Zn(2+)</name>
        <dbReference type="ChEBI" id="CHEBI:29105"/>
        <label>2</label>
    </ligand>
</feature>
<reference key="1">
    <citation type="journal article" date="2007" name="PLoS ONE">
        <title>Analysis of the neurotoxin complex genes in Clostridium botulinum A1-A4 and B1 strains: BoNT/A3, /Ba4 and /B1 clusters are located within plasmids.</title>
        <authorList>
            <person name="Smith T.J."/>
            <person name="Hill K.K."/>
            <person name="Foley B.T."/>
            <person name="Detter J.C."/>
            <person name="Munk A.C."/>
            <person name="Bruce D.C."/>
            <person name="Doggett N.A."/>
            <person name="Smith L.A."/>
            <person name="Marks J.D."/>
            <person name="Xie G."/>
            <person name="Brettin T.S."/>
        </authorList>
    </citation>
    <scope>NUCLEOTIDE SEQUENCE [LARGE SCALE GENOMIC DNA]</scope>
    <source>
        <strain>Okra / Type B1</strain>
    </source>
</reference>
<gene>
    <name evidence="1" type="primary">rpoC</name>
    <name type="ordered locus">CLD_1017</name>
</gene>
<accession>B1IGG1</accession>
<proteinExistence type="inferred from homology"/>
<dbReference type="EC" id="2.7.7.6" evidence="1"/>
<dbReference type="EMBL" id="CP000939">
    <property type="protein sequence ID" value="ACA45530.1"/>
    <property type="molecule type" value="Genomic_DNA"/>
</dbReference>
<dbReference type="RefSeq" id="WP_015957891.1">
    <property type="nucleotide sequence ID" value="NC_010516.1"/>
</dbReference>
<dbReference type="SMR" id="B1IGG1"/>
<dbReference type="KEGG" id="cbb:CLD_1017"/>
<dbReference type="HOGENOM" id="CLU_000524_3_1_9"/>
<dbReference type="Proteomes" id="UP000008541">
    <property type="component" value="Chromosome"/>
</dbReference>
<dbReference type="GO" id="GO:0000428">
    <property type="term" value="C:DNA-directed RNA polymerase complex"/>
    <property type="evidence" value="ECO:0007669"/>
    <property type="project" value="UniProtKB-KW"/>
</dbReference>
<dbReference type="GO" id="GO:0003677">
    <property type="term" value="F:DNA binding"/>
    <property type="evidence" value="ECO:0007669"/>
    <property type="project" value="UniProtKB-UniRule"/>
</dbReference>
<dbReference type="GO" id="GO:0003899">
    <property type="term" value="F:DNA-directed RNA polymerase activity"/>
    <property type="evidence" value="ECO:0007669"/>
    <property type="project" value="UniProtKB-UniRule"/>
</dbReference>
<dbReference type="GO" id="GO:0000287">
    <property type="term" value="F:magnesium ion binding"/>
    <property type="evidence" value="ECO:0007669"/>
    <property type="project" value="UniProtKB-UniRule"/>
</dbReference>
<dbReference type="GO" id="GO:0008270">
    <property type="term" value="F:zinc ion binding"/>
    <property type="evidence" value="ECO:0007669"/>
    <property type="project" value="UniProtKB-UniRule"/>
</dbReference>
<dbReference type="GO" id="GO:0006351">
    <property type="term" value="P:DNA-templated transcription"/>
    <property type="evidence" value="ECO:0007669"/>
    <property type="project" value="UniProtKB-UniRule"/>
</dbReference>
<dbReference type="CDD" id="cd02655">
    <property type="entry name" value="RNAP_beta'_C"/>
    <property type="match status" value="1"/>
</dbReference>
<dbReference type="CDD" id="cd01609">
    <property type="entry name" value="RNAP_beta'_N"/>
    <property type="match status" value="1"/>
</dbReference>
<dbReference type="FunFam" id="1.10.150.390:FF:000002">
    <property type="entry name" value="DNA-directed RNA polymerase subunit beta"/>
    <property type="match status" value="1"/>
</dbReference>
<dbReference type="FunFam" id="1.10.40.90:FF:000001">
    <property type="entry name" value="DNA-directed RNA polymerase subunit beta"/>
    <property type="match status" value="1"/>
</dbReference>
<dbReference type="FunFam" id="4.10.860.120:FF:000001">
    <property type="entry name" value="DNA-directed RNA polymerase subunit beta"/>
    <property type="match status" value="1"/>
</dbReference>
<dbReference type="Gene3D" id="1.10.132.30">
    <property type="match status" value="1"/>
</dbReference>
<dbReference type="Gene3D" id="1.10.150.390">
    <property type="match status" value="1"/>
</dbReference>
<dbReference type="Gene3D" id="1.10.1790.20">
    <property type="match status" value="1"/>
</dbReference>
<dbReference type="Gene3D" id="1.10.40.90">
    <property type="match status" value="1"/>
</dbReference>
<dbReference type="Gene3D" id="2.40.40.20">
    <property type="match status" value="1"/>
</dbReference>
<dbReference type="Gene3D" id="2.40.50.100">
    <property type="match status" value="1"/>
</dbReference>
<dbReference type="Gene3D" id="4.10.860.120">
    <property type="entry name" value="RNA polymerase II, clamp domain"/>
    <property type="match status" value="1"/>
</dbReference>
<dbReference type="Gene3D" id="1.10.274.100">
    <property type="entry name" value="RNA polymerase Rpb1, domain 3"/>
    <property type="match status" value="1"/>
</dbReference>
<dbReference type="HAMAP" id="MF_01322">
    <property type="entry name" value="RNApol_bact_RpoC"/>
    <property type="match status" value="1"/>
</dbReference>
<dbReference type="InterPro" id="IPR045867">
    <property type="entry name" value="DNA-dir_RpoC_beta_prime"/>
</dbReference>
<dbReference type="InterPro" id="IPR012754">
    <property type="entry name" value="DNA-dir_RpoC_beta_prime_bact"/>
</dbReference>
<dbReference type="InterPro" id="IPR000722">
    <property type="entry name" value="RNA_pol_asu"/>
</dbReference>
<dbReference type="InterPro" id="IPR006592">
    <property type="entry name" value="RNA_pol_N"/>
</dbReference>
<dbReference type="InterPro" id="IPR007080">
    <property type="entry name" value="RNA_pol_Rpb1_1"/>
</dbReference>
<dbReference type="InterPro" id="IPR007066">
    <property type="entry name" value="RNA_pol_Rpb1_3"/>
</dbReference>
<dbReference type="InterPro" id="IPR042102">
    <property type="entry name" value="RNA_pol_Rpb1_3_sf"/>
</dbReference>
<dbReference type="InterPro" id="IPR007083">
    <property type="entry name" value="RNA_pol_Rpb1_4"/>
</dbReference>
<dbReference type="InterPro" id="IPR007081">
    <property type="entry name" value="RNA_pol_Rpb1_5"/>
</dbReference>
<dbReference type="InterPro" id="IPR044893">
    <property type="entry name" value="RNA_pol_Rpb1_clamp_domain"/>
</dbReference>
<dbReference type="InterPro" id="IPR038120">
    <property type="entry name" value="Rpb1_funnel_sf"/>
</dbReference>
<dbReference type="NCBIfam" id="NF011498">
    <property type="entry name" value="PRK14906.1"/>
    <property type="match status" value="1"/>
</dbReference>
<dbReference type="NCBIfam" id="TIGR02386">
    <property type="entry name" value="rpoC_TIGR"/>
    <property type="match status" value="1"/>
</dbReference>
<dbReference type="PANTHER" id="PTHR19376">
    <property type="entry name" value="DNA-DIRECTED RNA POLYMERASE"/>
    <property type="match status" value="1"/>
</dbReference>
<dbReference type="PANTHER" id="PTHR19376:SF54">
    <property type="entry name" value="DNA-DIRECTED RNA POLYMERASE SUBUNIT BETA"/>
    <property type="match status" value="1"/>
</dbReference>
<dbReference type="Pfam" id="PF04997">
    <property type="entry name" value="RNA_pol_Rpb1_1"/>
    <property type="match status" value="1"/>
</dbReference>
<dbReference type="Pfam" id="PF00623">
    <property type="entry name" value="RNA_pol_Rpb1_2"/>
    <property type="match status" value="2"/>
</dbReference>
<dbReference type="Pfam" id="PF04983">
    <property type="entry name" value="RNA_pol_Rpb1_3"/>
    <property type="match status" value="1"/>
</dbReference>
<dbReference type="Pfam" id="PF05000">
    <property type="entry name" value="RNA_pol_Rpb1_4"/>
    <property type="match status" value="1"/>
</dbReference>
<dbReference type="Pfam" id="PF04998">
    <property type="entry name" value="RNA_pol_Rpb1_5"/>
    <property type="match status" value="1"/>
</dbReference>
<dbReference type="SMART" id="SM00663">
    <property type="entry name" value="RPOLA_N"/>
    <property type="match status" value="1"/>
</dbReference>
<dbReference type="SUPFAM" id="SSF64484">
    <property type="entry name" value="beta and beta-prime subunits of DNA dependent RNA-polymerase"/>
    <property type="match status" value="1"/>
</dbReference>
<organism>
    <name type="scientific">Clostridium botulinum (strain Okra / Type B1)</name>
    <dbReference type="NCBI Taxonomy" id="498213"/>
    <lineage>
        <taxon>Bacteria</taxon>
        <taxon>Bacillati</taxon>
        <taxon>Bacillota</taxon>
        <taxon>Clostridia</taxon>
        <taxon>Eubacteriales</taxon>
        <taxon>Clostridiaceae</taxon>
        <taxon>Clostridium</taxon>
    </lineage>
</organism>
<comment type="function">
    <text evidence="1">DNA-dependent RNA polymerase catalyzes the transcription of DNA into RNA using the four ribonucleoside triphosphates as substrates.</text>
</comment>
<comment type="catalytic activity">
    <reaction evidence="1">
        <text>RNA(n) + a ribonucleoside 5'-triphosphate = RNA(n+1) + diphosphate</text>
        <dbReference type="Rhea" id="RHEA:21248"/>
        <dbReference type="Rhea" id="RHEA-COMP:14527"/>
        <dbReference type="Rhea" id="RHEA-COMP:17342"/>
        <dbReference type="ChEBI" id="CHEBI:33019"/>
        <dbReference type="ChEBI" id="CHEBI:61557"/>
        <dbReference type="ChEBI" id="CHEBI:140395"/>
        <dbReference type="EC" id="2.7.7.6"/>
    </reaction>
</comment>
<comment type="cofactor">
    <cofactor evidence="1">
        <name>Mg(2+)</name>
        <dbReference type="ChEBI" id="CHEBI:18420"/>
    </cofactor>
    <text evidence="1">Binds 1 Mg(2+) ion per subunit.</text>
</comment>
<comment type="cofactor">
    <cofactor evidence="1">
        <name>Zn(2+)</name>
        <dbReference type="ChEBI" id="CHEBI:29105"/>
    </cofactor>
    <text evidence="1">Binds 2 Zn(2+) ions per subunit.</text>
</comment>
<comment type="subunit">
    <text evidence="1">The RNAP catalytic core consists of 2 alpha, 1 beta, 1 beta' and 1 omega subunit. When a sigma factor is associated with the core the holoenzyme is formed, which can initiate transcription.</text>
</comment>
<comment type="similarity">
    <text evidence="1">Belongs to the RNA polymerase beta' chain family.</text>
</comment>
<sequence>MFELNNFDALQIGLASPEKIREWSRGEVKKPETINYRTLKPERDGLFCERIFGPMKDWECHCGKYKRIRYKGIVCDRCGVEVTKAKVRRERMGHIELAAPVSHIWYFKGIPSRMGLILDMSPRALEKVLYFASYVVLDPKETPLLKKQLLNEKEYRESIDKYGDDSFVAAMGAEAVKTLLDEIDLEQSSIELKEELKTSTGQKKIRIIRRLEVVESFRKSGNRPDWMVIDVIPVIPPDLRPMVQLDGGRFATSDLNDLYRRVINRNNRLKKLLDLGAPDIIVRNEKRMLQEAVDALIDNGRRGRPVTGPGNRPLKSLSDMLKGKQGRFRQNLLGKRVDYSGRSVIVVGPELKMYQCGLPKEMALELFKPFVMKKLVQNGLAHNIKSAKRMVERVQPQVWDVLEEVISDHPVLLNRAPTLHRLGIQAFQPVLVEGRAIKLHPLVCTAYNADFDGDQMAVHVPLSVEAQAEARFLMLAAHNILKPSDGKPVSVPTQDMVLGSYYLTMDKDGVKGEGKVFSCPEEVLMAYQCKAVDIHAKIKVRLKKVIDGETIERIIETTPGKIIFNESIPQDLGYIDRTVPENKLKLEVDFLVSKKTLGGIINRCYMKHGATKTSIMLDKIKAKGYHYSTIGAITISTSDMVVPEAKRELLQNTEKQVEKIQKMYRRGFISEEERYEKVIDLWTKTTEDVANALMGSLDSFNPIYMMADSGARGSKSQIKQLAGMRGLMANPSGKIIELPIKASFREGLDVLEYFISTHGARKGNADTALKTADSGYLTRRLVDVSQDVIVRQEDCGTEEGYEVSEIKEGNEVIEPLVERLSGRYPSEDIIHPTTGEVIVKRNTYMNEDIAKKVSDAGIKKVKIRSVFTCKSKHGVCARCYGMNMATSQKIHIGEAVGIVAAQSIGEPGTQLTMRTFHTGGVAGADITQGLPRVEELFEARKPKGLAIVSEVSGTVKMEETKKKRTIIVVTDDGEEVSYDIPFGSRIKVKNGDIISAGDEITEGSINPHDILRIKGVDGVKNYLLSEVQKVYRLQGVDINDKHLEVVIRQMTRKIKIEDSGDTELLPGTMIDVFDFEEANREILEKGGEPAVGRIALLGITKAALATDSFLSAASFQETTRVLTDAAIKGKIDPLLGLKENVIIGKLIPAGTGMTRYRSIQINTDDENIEEDSMDSIEV</sequence>
<evidence type="ECO:0000255" key="1">
    <source>
        <dbReference type="HAMAP-Rule" id="MF_01322"/>
    </source>
</evidence>